<protein>
    <recommendedName>
        <fullName evidence="1">Large ribosomal subunit protein eL31</fullName>
    </recommendedName>
    <alternativeName>
        <fullName evidence="2">50S ribosomal protein L31e</fullName>
    </alternativeName>
</protein>
<name>RL31_THEGJ</name>
<organism>
    <name type="scientific">Thermococcus gammatolerans (strain DSM 15229 / JCM 11827 / EJ3)</name>
    <dbReference type="NCBI Taxonomy" id="593117"/>
    <lineage>
        <taxon>Archaea</taxon>
        <taxon>Methanobacteriati</taxon>
        <taxon>Methanobacteriota</taxon>
        <taxon>Thermococci</taxon>
        <taxon>Thermococcales</taxon>
        <taxon>Thermococcaceae</taxon>
        <taxon>Thermococcus</taxon>
    </lineage>
</organism>
<evidence type="ECO:0000255" key="1">
    <source>
        <dbReference type="HAMAP-Rule" id="MF_00410"/>
    </source>
</evidence>
<evidence type="ECO:0000305" key="2"/>
<gene>
    <name evidence="1" type="primary">rpl31e</name>
    <name type="ordered locus">TGAM_1683</name>
</gene>
<accession>C5A7H3</accession>
<proteinExistence type="inferred from homology"/>
<dbReference type="EMBL" id="CP001398">
    <property type="protein sequence ID" value="ACS34185.1"/>
    <property type="molecule type" value="Genomic_DNA"/>
</dbReference>
<dbReference type="RefSeq" id="WP_015859296.1">
    <property type="nucleotide sequence ID" value="NC_012804.1"/>
</dbReference>
<dbReference type="SMR" id="C5A7H3"/>
<dbReference type="STRING" id="593117.TGAM_1683"/>
<dbReference type="PaxDb" id="593117-TGAM_1683"/>
<dbReference type="GeneID" id="7987593"/>
<dbReference type="KEGG" id="tga:TGAM_1683"/>
<dbReference type="PATRIC" id="fig|593117.10.peg.1689"/>
<dbReference type="eggNOG" id="arCOG04473">
    <property type="taxonomic scope" value="Archaea"/>
</dbReference>
<dbReference type="HOGENOM" id="CLU_112570_3_2_2"/>
<dbReference type="OrthoDB" id="10127at2157"/>
<dbReference type="Proteomes" id="UP000001488">
    <property type="component" value="Chromosome"/>
</dbReference>
<dbReference type="GO" id="GO:1990904">
    <property type="term" value="C:ribonucleoprotein complex"/>
    <property type="evidence" value="ECO:0007669"/>
    <property type="project" value="UniProtKB-KW"/>
</dbReference>
<dbReference type="GO" id="GO:0005840">
    <property type="term" value="C:ribosome"/>
    <property type="evidence" value="ECO:0007669"/>
    <property type="project" value="UniProtKB-KW"/>
</dbReference>
<dbReference type="GO" id="GO:0003735">
    <property type="term" value="F:structural constituent of ribosome"/>
    <property type="evidence" value="ECO:0007669"/>
    <property type="project" value="InterPro"/>
</dbReference>
<dbReference type="GO" id="GO:0006412">
    <property type="term" value="P:translation"/>
    <property type="evidence" value="ECO:0007669"/>
    <property type="project" value="UniProtKB-UniRule"/>
</dbReference>
<dbReference type="FunFam" id="3.10.440.10:FF:000005">
    <property type="entry name" value="50S ribosomal protein L31e"/>
    <property type="match status" value="1"/>
</dbReference>
<dbReference type="Gene3D" id="3.10.440.10">
    <property type="match status" value="1"/>
</dbReference>
<dbReference type="HAMAP" id="MF_00410">
    <property type="entry name" value="Ribosomal_eL31"/>
    <property type="match status" value="1"/>
</dbReference>
<dbReference type="InterPro" id="IPR000054">
    <property type="entry name" value="Ribosomal_eL31"/>
</dbReference>
<dbReference type="InterPro" id="IPR023621">
    <property type="entry name" value="Ribosomal_eL31_dom_sf"/>
</dbReference>
<dbReference type="NCBIfam" id="NF002258">
    <property type="entry name" value="PRK01192.1-1"/>
    <property type="match status" value="1"/>
</dbReference>
<dbReference type="Pfam" id="PF01198">
    <property type="entry name" value="Ribosomal_L31e"/>
    <property type="match status" value="1"/>
</dbReference>
<dbReference type="SMART" id="SM01380">
    <property type="entry name" value="Ribosomal_L31e"/>
    <property type="match status" value="1"/>
</dbReference>
<dbReference type="SUPFAM" id="SSF54575">
    <property type="entry name" value="Ribosomal protein L31e"/>
    <property type="match status" value="1"/>
</dbReference>
<sequence length="90" mass="10381">MPIEPGQEVIFVVPIRKIKKRVPRWKRAPRAAKFVREWIARHAKAEEVKLEPAVNEKLWERGAEKPPNKLRVKVVVEVVDGKRVAKVSLA</sequence>
<reference key="1">
    <citation type="journal article" date="2007" name="Genome Biol.">
        <title>Genome analysis and genome-wide proteomics of Thermococcus gammatolerans, the most radioresistant organism known amongst the Archaea.</title>
        <authorList>
            <person name="Zivanovic Y."/>
            <person name="Armengaud J."/>
            <person name="Lagorce A."/>
            <person name="Leplat C."/>
            <person name="Guerin P."/>
            <person name="Dutertre M."/>
            <person name="Anthouard V."/>
            <person name="Forterre P."/>
            <person name="Wincker P."/>
            <person name="Confalonieri F."/>
        </authorList>
    </citation>
    <scope>NUCLEOTIDE SEQUENCE [LARGE SCALE GENOMIC DNA]</scope>
    <source>
        <strain>DSM 15229 / JCM 11827 / EJ3</strain>
    </source>
</reference>
<keyword id="KW-1185">Reference proteome</keyword>
<keyword id="KW-0687">Ribonucleoprotein</keyword>
<keyword id="KW-0689">Ribosomal protein</keyword>
<comment type="similarity">
    <text evidence="1">Belongs to the eukaryotic ribosomal protein eL31 family.</text>
</comment>
<feature type="chain" id="PRO_1000205982" description="Large ribosomal subunit protein eL31">
    <location>
        <begin position="1"/>
        <end position="90"/>
    </location>
</feature>